<comment type="function">
    <text evidence="1">Required for formate dehydrogenase (FDH) activity. Acts as a sulfur carrier protein that transfers sulfur from IscS to the molybdenum cofactor prior to its insertion into FDH.</text>
</comment>
<comment type="subcellular location">
    <subcellularLocation>
        <location evidence="1">Cytoplasm</location>
    </subcellularLocation>
</comment>
<comment type="similarity">
    <text evidence="1">Belongs to the FdhD family.</text>
</comment>
<organism>
    <name type="scientific">Nocardia farcinica (strain IFM 10152)</name>
    <dbReference type="NCBI Taxonomy" id="247156"/>
    <lineage>
        <taxon>Bacteria</taxon>
        <taxon>Bacillati</taxon>
        <taxon>Actinomycetota</taxon>
        <taxon>Actinomycetes</taxon>
        <taxon>Mycobacteriales</taxon>
        <taxon>Nocardiaceae</taxon>
        <taxon>Nocardia</taxon>
    </lineage>
</organism>
<evidence type="ECO:0000255" key="1">
    <source>
        <dbReference type="HAMAP-Rule" id="MF_00187"/>
    </source>
</evidence>
<feature type="chain" id="PRO_0000152913" description="Sulfur carrier protein FdhD">
    <location>
        <begin position="1"/>
        <end position="279"/>
    </location>
</feature>
<feature type="active site" description="Cysteine persulfide intermediate" evidence="1">
    <location>
        <position position="112"/>
    </location>
</feature>
<keyword id="KW-0963">Cytoplasm</keyword>
<keyword id="KW-0501">Molybdenum cofactor biosynthesis</keyword>
<keyword id="KW-1185">Reference proteome</keyword>
<gene>
    <name evidence="1" type="primary">fdhD</name>
    <name type="ordered locus">NFA_13390</name>
</gene>
<name>FDHD_NOCFA</name>
<dbReference type="EMBL" id="AP006618">
    <property type="protein sequence ID" value="BAD56184.1"/>
    <property type="molecule type" value="Genomic_DNA"/>
</dbReference>
<dbReference type="RefSeq" id="WP_011207869.1">
    <property type="nucleotide sequence ID" value="NC_006361.1"/>
</dbReference>
<dbReference type="SMR" id="Q5Z057"/>
<dbReference type="STRING" id="247156.NFA_13390"/>
<dbReference type="GeneID" id="61132161"/>
<dbReference type="KEGG" id="nfa:NFA_13390"/>
<dbReference type="eggNOG" id="COG1526">
    <property type="taxonomic scope" value="Bacteria"/>
</dbReference>
<dbReference type="HOGENOM" id="CLU_056887_3_0_11"/>
<dbReference type="OrthoDB" id="3197277at2"/>
<dbReference type="Proteomes" id="UP000006820">
    <property type="component" value="Chromosome"/>
</dbReference>
<dbReference type="GO" id="GO:0005737">
    <property type="term" value="C:cytoplasm"/>
    <property type="evidence" value="ECO:0007669"/>
    <property type="project" value="UniProtKB-SubCell"/>
</dbReference>
<dbReference type="GO" id="GO:0097163">
    <property type="term" value="F:sulfur carrier activity"/>
    <property type="evidence" value="ECO:0007669"/>
    <property type="project" value="UniProtKB-UniRule"/>
</dbReference>
<dbReference type="GO" id="GO:0016783">
    <property type="term" value="F:sulfurtransferase activity"/>
    <property type="evidence" value="ECO:0007669"/>
    <property type="project" value="InterPro"/>
</dbReference>
<dbReference type="GO" id="GO:0006777">
    <property type="term" value="P:Mo-molybdopterin cofactor biosynthetic process"/>
    <property type="evidence" value="ECO:0007669"/>
    <property type="project" value="UniProtKB-UniRule"/>
</dbReference>
<dbReference type="Gene3D" id="3.10.20.10">
    <property type="match status" value="1"/>
</dbReference>
<dbReference type="Gene3D" id="3.40.140.10">
    <property type="entry name" value="Cytidine Deaminase, domain 2"/>
    <property type="match status" value="1"/>
</dbReference>
<dbReference type="HAMAP" id="MF_00187">
    <property type="entry name" value="FdhD"/>
    <property type="match status" value="1"/>
</dbReference>
<dbReference type="InterPro" id="IPR016193">
    <property type="entry name" value="Cytidine_deaminase-like"/>
</dbReference>
<dbReference type="InterPro" id="IPR003786">
    <property type="entry name" value="FdhD"/>
</dbReference>
<dbReference type="NCBIfam" id="TIGR00129">
    <property type="entry name" value="fdhD_narQ"/>
    <property type="match status" value="1"/>
</dbReference>
<dbReference type="NCBIfam" id="NF001943">
    <property type="entry name" value="PRK00724.1-2"/>
    <property type="match status" value="1"/>
</dbReference>
<dbReference type="PANTHER" id="PTHR30592">
    <property type="entry name" value="FORMATE DEHYDROGENASE"/>
    <property type="match status" value="1"/>
</dbReference>
<dbReference type="PANTHER" id="PTHR30592:SF1">
    <property type="entry name" value="SULFUR CARRIER PROTEIN FDHD"/>
    <property type="match status" value="1"/>
</dbReference>
<dbReference type="Pfam" id="PF02634">
    <property type="entry name" value="FdhD-NarQ"/>
    <property type="match status" value="1"/>
</dbReference>
<dbReference type="PIRSF" id="PIRSF015626">
    <property type="entry name" value="FdhD"/>
    <property type="match status" value="1"/>
</dbReference>
<dbReference type="SUPFAM" id="SSF53927">
    <property type="entry name" value="Cytidine deaminase-like"/>
    <property type="match status" value="1"/>
</dbReference>
<proteinExistence type="inferred from homology"/>
<sequence>MSGRVTARRRVVRLTPAGEIRRQDTLAVEEPLEIRIGGQSLTVTMRTPGSDIDLVHGFLLSENMIGAAEDVVSARYCAGTDEQGRNTYNVLDVELRRPVPVRTRHVLTTGACGLCGKTALDEVRAVTRFPLPAHGVTLAADVLADLPATLRAGQSVFQATGGLHAAGLFTVDGTPLAVREDIGRHNAVDKVIGWALRENRVPAHELVLIVSGRASFELVQKAVMAGIPILGAVSAPSSLAVDLAEEAGLTLVGFLRGETMNVYSGAHRLRSVSAGTRTA</sequence>
<protein>
    <recommendedName>
        <fullName evidence="1">Sulfur carrier protein FdhD</fullName>
    </recommendedName>
</protein>
<reference key="1">
    <citation type="journal article" date="2004" name="Proc. Natl. Acad. Sci. U.S.A.">
        <title>The complete genomic sequence of Nocardia farcinica IFM 10152.</title>
        <authorList>
            <person name="Ishikawa J."/>
            <person name="Yamashita A."/>
            <person name="Mikami Y."/>
            <person name="Hoshino Y."/>
            <person name="Kurita H."/>
            <person name="Hotta K."/>
            <person name="Shiba T."/>
            <person name="Hattori M."/>
        </authorList>
    </citation>
    <scope>NUCLEOTIDE SEQUENCE [LARGE SCALE GENOMIC DNA]</scope>
    <source>
        <strain>IFM 10152</strain>
    </source>
</reference>
<accession>Q5Z057</accession>